<gene>
    <name type="ordered locus">CENSYa_1764</name>
</gene>
<accession>A0RYF8</accession>
<feature type="chain" id="PRO_0000284559" description="DNA-binding protein CENSYa_1764">
    <location>
        <begin position="1"/>
        <end position="95"/>
    </location>
</feature>
<feature type="region of interest" description="Disordered" evidence="1">
    <location>
        <begin position="1"/>
        <end position="21"/>
    </location>
</feature>
<proteinExistence type="inferred from homology"/>
<keyword id="KW-0238">DNA-binding</keyword>
<keyword id="KW-1185">Reference proteome</keyword>
<evidence type="ECO:0000256" key="1">
    <source>
        <dbReference type="SAM" id="MobiDB-lite"/>
    </source>
</evidence>
<evidence type="ECO:0000305" key="2"/>
<comment type="similarity">
    <text evidence="2">Belongs to the PDCD5 family.</text>
</comment>
<reference key="1">
    <citation type="journal article" date="2006" name="Proc. Natl. Acad. Sci. U.S.A.">
        <title>Genomic analysis of the uncultivated marine crenarchaeote Cenarchaeum symbiosum.</title>
        <authorList>
            <person name="Hallam S.J."/>
            <person name="Konstantinidis K.T."/>
            <person name="Putnam N."/>
            <person name="Schleper C."/>
            <person name="Watanabe Y."/>
            <person name="Sugahara J."/>
            <person name="Preston C."/>
            <person name="de la Torre J."/>
            <person name="Richardson P.M."/>
            <person name="DeLong E.F."/>
        </authorList>
    </citation>
    <scope>NUCLEOTIDE SEQUENCE [LARGE SCALE GENOMIC DNA]</scope>
    <source>
        <strain>A</strain>
    </source>
</reference>
<name>Y1764_CENSY</name>
<sequence length="95" mass="10776">MSYTDPDDSLPEHVPGEAEMSAQKEAILKQILEPQARMRLSNIRMVKPETAAALESHLINAASQGRLAGKISDEHLKQILQSMQKPRREFKINRR</sequence>
<organism>
    <name type="scientific">Cenarchaeum symbiosum (strain A)</name>
    <dbReference type="NCBI Taxonomy" id="414004"/>
    <lineage>
        <taxon>Archaea</taxon>
        <taxon>Nitrososphaerota</taxon>
        <taxon>Candidatus Cenarchaeales</taxon>
        <taxon>Candidatus Cenarchaeaceae</taxon>
        <taxon>Candidatus Cenarchaeum</taxon>
    </lineage>
</organism>
<dbReference type="EMBL" id="DP000238">
    <property type="protein sequence ID" value="ABK78375.1"/>
    <property type="molecule type" value="Genomic_DNA"/>
</dbReference>
<dbReference type="SMR" id="A0RYF8"/>
<dbReference type="STRING" id="414004.CENSYa_1764"/>
<dbReference type="EnsemblBacteria" id="ABK78375">
    <property type="protein sequence ID" value="ABK78375"/>
    <property type="gene ID" value="CENSYa_1764"/>
</dbReference>
<dbReference type="KEGG" id="csy:CENSYa_1764"/>
<dbReference type="HOGENOM" id="CLU_122978_3_1_2"/>
<dbReference type="Proteomes" id="UP000000758">
    <property type="component" value="Chromosome"/>
</dbReference>
<dbReference type="GO" id="GO:0005829">
    <property type="term" value="C:cytosol"/>
    <property type="evidence" value="ECO:0007669"/>
    <property type="project" value="TreeGrafter"/>
</dbReference>
<dbReference type="GO" id="GO:0003677">
    <property type="term" value="F:DNA binding"/>
    <property type="evidence" value="ECO:0007669"/>
    <property type="project" value="UniProtKB-KW"/>
</dbReference>
<dbReference type="Gene3D" id="1.10.8.140">
    <property type="entry name" value="PDCD5-like"/>
    <property type="match status" value="1"/>
</dbReference>
<dbReference type="InterPro" id="IPR002836">
    <property type="entry name" value="PDCD5-like"/>
</dbReference>
<dbReference type="InterPro" id="IPR036883">
    <property type="entry name" value="PDCD5-like_sf"/>
</dbReference>
<dbReference type="NCBIfam" id="NF003268">
    <property type="entry name" value="PRK04239.1"/>
    <property type="match status" value="1"/>
</dbReference>
<dbReference type="PANTHER" id="PTHR10840">
    <property type="entry name" value="PROGRAMMED CELL DEATH PROTEIN 5"/>
    <property type="match status" value="1"/>
</dbReference>
<dbReference type="PANTHER" id="PTHR10840:SF0">
    <property type="entry name" value="PROGRAMMED CELL DEATH PROTEIN 5"/>
    <property type="match status" value="1"/>
</dbReference>
<dbReference type="Pfam" id="PF01984">
    <property type="entry name" value="dsDNA_bind"/>
    <property type="match status" value="1"/>
</dbReference>
<dbReference type="PIRSF" id="PIRSF015730">
    <property type="entry name" value="TFAR19"/>
    <property type="match status" value="1"/>
</dbReference>
<dbReference type="SUPFAM" id="SSF46950">
    <property type="entry name" value="Double-stranded DNA-binding domain"/>
    <property type="match status" value="1"/>
</dbReference>
<protein>
    <recommendedName>
        <fullName>DNA-binding protein CENSYa_1764</fullName>
    </recommendedName>
</protein>